<reference key="1">
    <citation type="journal article" date="1998" name="Science">
        <title>Complete genome sequence of Treponema pallidum, the syphilis spirochete.</title>
        <authorList>
            <person name="Fraser C.M."/>
            <person name="Norris S.J."/>
            <person name="Weinstock G.M."/>
            <person name="White O."/>
            <person name="Sutton G.G."/>
            <person name="Dodson R.J."/>
            <person name="Gwinn M.L."/>
            <person name="Hickey E.K."/>
            <person name="Clayton R.A."/>
            <person name="Ketchum K.A."/>
            <person name="Sodergren E."/>
            <person name="Hardham J.M."/>
            <person name="McLeod M.P."/>
            <person name="Salzberg S.L."/>
            <person name="Peterson J.D."/>
            <person name="Khalak H.G."/>
            <person name="Richardson D.L."/>
            <person name="Howell J.K."/>
            <person name="Chidambaram M."/>
            <person name="Utterback T.R."/>
            <person name="McDonald L.A."/>
            <person name="Artiach P."/>
            <person name="Bowman C."/>
            <person name="Cotton M.D."/>
            <person name="Fujii C."/>
            <person name="Garland S.A."/>
            <person name="Hatch B."/>
            <person name="Horst K."/>
            <person name="Roberts K.M."/>
            <person name="Sandusky M."/>
            <person name="Weidman J.F."/>
            <person name="Smith H.O."/>
            <person name="Venter J.C."/>
        </authorList>
    </citation>
    <scope>NUCLEOTIDE SEQUENCE [LARGE SCALE GENOMIC DNA]</scope>
    <source>
        <strain>Nichols</strain>
    </source>
</reference>
<name>GCH1L_TREPA</name>
<gene>
    <name type="ordered locus">TP_0977</name>
</gene>
<evidence type="ECO:0000250" key="1">
    <source>
        <dbReference type="UniProtKB" id="P0AFP6"/>
    </source>
</evidence>
<evidence type="ECO:0000305" key="2"/>
<sequence>MTARELDAYFRSFLNFGPFVSCDVALNGLQVANSGAPVHKVAFAVDACAQSIDAAARAGARMLFVHHGLFWGRIEPLTGMQYRRVQALLTHDIALYAVHLPLDAHPQYGNNAGLAARVGLRQGGPFGFIRGTAVGLWGTVAENTTPSQEAMQQHAACTAPDTHRVTHANAISPSAGLSLQQVVHRLFPAEEQPVRLLPFGKQRIERVGILSGKAGTYLAEAIALDLDLFITGEIEHSCYHTAREHSISVIAGGHYQTETVGLQLVARKLQRDTGIETLFLDIPTGM</sequence>
<dbReference type="EMBL" id="AE000520">
    <property type="protein sequence ID" value="AAC65932.1"/>
    <property type="molecule type" value="Genomic_DNA"/>
</dbReference>
<dbReference type="PIR" id="G71257">
    <property type="entry name" value="G71257"/>
</dbReference>
<dbReference type="RefSeq" id="WP_010882421.1">
    <property type="nucleotide sequence ID" value="NC_021490.2"/>
</dbReference>
<dbReference type="SMR" id="O83942"/>
<dbReference type="STRING" id="243276.TP_0977"/>
<dbReference type="EnsemblBacteria" id="AAC65932">
    <property type="protein sequence ID" value="AAC65932"/>
    <property type="gene ID" value="TP_0977"/>
</dbReference>
<dbReference type="KEGG" id="tpa:TP_0977"/>
<dbReference type="KEGG" id="tpw:TPANIC_0977"/>
<dbReference type="eggNOG" id="COG0327">
    <property type="taxonomic scope" value="Bacteria"/>
</dbReference>
<dbReference type="HOGENOM" id="CLU_037423_3_0_12"/>
<dbReference type="OrthoDB" id="9792792at2"/>
<dbReference type="Proteomes" id="UP000000811">
    <property type="component" value="Chromosome"/>
</dbReference>
<dbReference type="GO" id="GO:0005737">
    <property type="term" value="C:cytoplasm"/>
    <property type="evidence" value="ECO:0007669"/>
    <property type="project" value="TreeGrafter"/>
</dbReference>
<dbReference type="GO" id="GO:0046872">
    <property type="term" value="F:metal ion binding"/>
    <property type="evidence" value="ECO:0007669"/>
    <property type="project" value="UniProtKB-KW"/>
</dbReference>
<dbReference type="FunFam" id="3.40.1390.30:FF:000001">
    <property type="entry name" value="GTP cyclohydrolase 1 type 2"/>
    <property type="match status" value="1"/>
</dbReference>
<dbReference type="Gene3D" id="3.40.1390.30">
    <property type="entry name" value="NIF3 (NGG1p interacting factor 3)-like"/>
    <property type="match status" value="2"/>
</dbReference>
<dbReference type="InterPro" id="IPR002678">
    <property type="entry name" value="DUF34/NIF3"/>
</dbReference>
<dbReference type="InterPro" id="IPR036069">
    <property type="entry name" value="DUF34/NIF3_sf"/>
</dbReference>
<dbReference type="NCBIfam" id="TIGR00486">
    <property type="entry name" value="YbgI_SA1388"/>
    <property type="match status" value="1"/>
</dbReference>
<dbReference type="PANTHER" id="PTHR13799:SF14">
    <property type="entry name" value="GTP CYCLOHYDROLASE 1 TYPE 2 HOMOLOG"/>
    <property type="match status" value="1"/>
</dbReference>
<dbReference type="PANTHER" id="PTHR13799">
    <property type="entry name" value="NGG1 INTERACTING FACTOR 3"/>
    <property type="match status" value="1"/>
</dbReference>
<dbReference type="Pfam" id="PF01784">
    <property type="entry name" value="DUF34_NIF3"/>
    <property type="match status" value="1"/>
</dbReference>
<dbReference type="SUPFAM" id="SSF102705">
    <property type="entry name" value="NIF3 (NGG1p interacting factor 3)-like"/>
    <property type="match status" value="1"/>
</dbReference>
<organism>
    <name type="scientific">Treponema pallidum (strain Nichols)</name>
    <dbReference type="NCBI Taxonomy" id="243276"/>
    <lineage>
        <taxon>Bacteria</taxon>
        <taxon>Pseudomonadati</taxon>
        <taxon>Spirochaetota</taxon>
        <taxon>Spirochaetia</taxon>
        <taxon>Spirochaetales</taxon>
        <taxon>Treponemataceae</taxon>
        <taxon>Treponema</taxon>
    </lineage>
</organism>
<accession>O83942</accession>
<protein>
    <recommendedName>
        <fullName>GTP cyclohydrolase 1 type 2 homolog</fullName>
    </recommendedName>
</protein>
<keyword id="KW-0479">Metal-binding</keyword>
<keyword id="KW-1185">Reference proteome</keyword>
<comment type="subunit">
    <text evidence="1">Homohexamer.</text>
</comment>
<comment type="similarity">
    <text evidence="2">Belongs to the GTP cyclohydrolase I type 2/NIF3 family.</text>
</comment>
<proteinExistence type="inferred from homology"/>
<feature type="chain" id="PRO_0000147341" description="GTP cyclohydrolase 1 type 2 homolog">
    <location>
        <begin position="1"/>
        <end position="286"/>
    </location>
</feature>
<feature type="binding site" evidence="1">
    <location>
        <position position="66"/>
    </location>
    <ligand>
        <name>a divalent metal cation</name>
        <dbReference type="ChEBI" id="CHEBI:60240"/>
        <label>1</label>
    </ligand>
</feature>
<feature type="binding site" evidence="1">
    <location>
        <position position="67"/>
    </location>
    <ligand>
        <name>a divalent metal cation</name>
        <dbReference type="ChEBI" id="CHEBI:60240"/>
        <label>2</label>
    </ligand>
</feature>
<feature type="binding site" evidence="1">
    <location>
        <position position="103"/>
    </location>
    <ligand>
        <name>a divalent metal cation</name>
        <dbReference type="ChEBI" id="CHEBI:60240"/>
        <label>1</label>
    </ligand>
</feature>
<feature type="binding site" evidence="1">
    <location>
        <position position="254"/>
    </location>
    <ligand>
        <name>a divalent metal cation</name>
        <dbReference type="ChEBI" id="CHEBI:60240"/>
        <label>2</label>
    </ligand>
</feature>
<feature type="binding site" evidence="1">
    <location>
        <position position="258"/>
    </location>
    <ligand>
        <name>a divalent metal cation</name>
        <dbReference type="ChEBI" id="CHEBI:60240"/>
        <label>1</label>
    </ligand>
</feature>
<feature type="binding site" evidence="1">
    <location>
        <position position="258"/>
    </location>
    <ligand>
        <name>a divalent metal cation</name>
        <dbReference type="ChEBI" id="CHEBI:60240"/>
        <label>2</label>
    </ligand>
</feature>